<accession>Q64511</accession>
<accession>Q7TQG4</accession>
<comment type="function">
    <text evidence="7">Key decatenating enzyme that alters DNA topology by binding to two double-stranded DNA molecules, generating a double-stranded break in one of the strands, passing the intact strand through the broken strand, and religating the broken strand. Plays a role in B-cell differentiation.</text>
</comment>
<comment type="catalytic activity">
    <reaction evidence="2 3">
        <text>ATP-dependent breakage, passage and rejoining of double-stranded DNA.</text>
        <dbReference type="EC" id="5.6.2.2"/>
    </reaction>
</comment>
<comment type="cofactor">
    <cofactor evidence="2 3">
        <name>Mg(2+)</name>
        <dbReference type="ChEBI" id="CHEBI:18420"/>
    </cofactor>
    <cofactor evidence="2 3">
        <name>Mn(2+)</name>
        <dbReference type="ChEBI" id="CHEBI:29035"/>
    </cofactor>
    <cofactor evidence="2 3">
        <name>Ca(2+)</name>
        <dbReference type="ChEBI" id="CHEBI:29108"/>
    </cofactor>
    <text evidence="2 3">Binds two Mg(2+) per subunit. The magnesium ions form salt bridges with both the protein and the DNA. Can also accept other divalent metal cations, such as Mn(2+) or Ca(2+).</text>
</comment>
<comment type="subunit">
    <text evidence="2 6">Homodimer (By similarity). Interacts with KIAA1210 (PubMed:28203736). Interacts with PLSCR1 (By similarity).</text>
</comment>
<comment type="interaction">
    <interactant intactId="EBI-2325586">
        <id>Q64511</id>
    </interactant>
    <interactant intactId="EBI-3835567">
        <id>Q9WVE0</id>
        <label>Aicda</label>
    </interactant>
    <organismsDiffer>false</organismsDiffer>
    <experiments>3</experiments>
</comment>
<comment type="subcellular location">
    <subcellularLocation>
        <location evidence="2">Nucleus</location>
        <location evidence="2">Nucleolus</location>
    </subcellularLocation>
    <subcellularLocation>
        <location evidence="2">Nucleus</location>
        <location evidence="2">Nucleoplasm</location>
    </subcellularLocation>
    <subcellularLocation>
        <location evidence="2">Nucleus</location>
    </subcellularLocation>
</comment>
<comment type="disruption phenotype">
    <text evidence="7">Knockout animals have B-cell developmental defects affecting multiple stages of development likely due to transcriptional defects. These mutant mice have altered splenic follicle structure with reduce marginal zone and follicular B-cell zones; immunophenotyping show decreased B- cells at all stages of development. Mutant mice fail to mount an antibody response to vaccination and B-cells fail to proliferate in response to stimulation, indicating deficits in B-cell function.</text>
</comment>
<comment type="miscellaneous">
    <text>Eukaryotic topoisomerase I and II can relax both negative and positive supercoils, whereas prokaryotic enzymes relax only negative supercoils.</text>
</comment>
<comment type="similarity">
    <text evidence="8">Belongs to the type II topoisomerase family.</text>
</comment>
<reference key="1">
    <citation type="submission" date="1994-09" db="EMBL/GenBank/DDBJ databases">
        <authorList>
            <person name="Miyaike M."/>
            <person name="Adachi N."/>
            <person name="Kikuchi A."/>
        </authorList>
    </citation>
    <scope>NUCLEOTIDE SEQUENCE [MRNA]</scope>
    <source>
        <strain>BALB/cJ</strain>
        <tissue>Brain</tissue>
    </source>
</reference>
<reference key="2">
    <citation type="journal article" date="2004" name="Genome Res.">
        <title>The status, quality, and expansion of the NIH full-length cDNA project: the Mammalian Gene Collection (MGC).</title>
        <authorList>
            <consortium name="The MGC Project Team"/>
        </authorList>
    </citation>
    <scope>NUCLEOTIDE SEQUENCE [LARGE SCALE MRNA]</scope>
    <source>
        <strain>C57BL/6J</strain>
        <tissue>Brain</tissue>
        <tissue>Eye</tissue>
    </source>
</reference>
<reference key="3">
    <citation type="journal article" date="2006" name="Mol. Cell. Proteomics">
        <title>Comprehensive identification of phosphorylation sites in postsynaptic density preparations.</title>
        <authorList>
            <person name="Trinidad J.C."/>
            <person name="Specht C.G."/>
            <person name="Thalhammer A."/>
            <person name="Schoepfer R."/>
            <person name="Burlingame A.L."/>
        </authorList>
    </citation>
    <scope>IDENTIFICATION BY MASS SPECTROMETRY [LARGE SCALE ANALYSIS]</scope>
    <source>
        <tissue>Brain</tissue>
    </source>
</reference>
<reference key="4">
    <citation type="journal article" date="2007" name="Proc. Natl. Acad. Sci. U.S.A.">
        <title>Large-scale phosphorylation analysis of mouse liver.</title>
        <authorList>
            <person name="Villen J."/>
            <person name="Beausoleil S.A."/>
            <person name="Gerber S.A."/>
            <person name="Gygi S.P."/>
        </authorList>
    </citation>
    <scope>PHOSPHORYLATION [LARGE SCALE ANALYSIS] AT SER-1387; SER-1509; SER-1511; SER-1513; SER-1537 AND SER-1539</scope>
    <scope>IDENTIFICATION BY MASS SPECTROMETRY [LARGE SCALE ANALYSIS]</scope>
    <source>
        <tissue>Liver</tissue>
    </source>
</reference>
<reference key="5">
    <citation type="journal article" date="2009" name="Immunity">
        <title>The phagosomal proteome in interferon-gamma-activated macrophages.</title>
        <authorList>
            <person name="Trost M."/>
            <person name="English L."/>
            <person name="Lemieux S."/>
            <person name="Courcelles M."/>
            <person name="Desjardins M."/>
            <person name="Thibault P."/>
        </authorList>
    </citation>
    <scope>PHOSPHORYLATION [LARGE SCALE ANALYSIS] AT SER-1400; SER-1509 AND SER-1511</scope>
    <scope>IDENTIFICATION BY MASS SPECTROMETRY [LARGE SCALE ANALYSIS]</scope>
</reference>
<reference key="6">
    <citation type="journal article" date="2009" name="Mol. Cell. Proteomics">
        <title>Large scale localization of protein phosphorylation by use of electron capture dissociation mass spectrometry.</title>
        <authorList>
            <person name="Sweet S.M."/>
            <person name="Bailey C.M."/>
            <person name="Cunningham D.L."/>
            <person name="Heath J.K."/>
            <person name="Cooper H.J."/>
        </authorList>
    </citation>
    <scope>PHOSPHORYLATION [LARGE SCALE ANALYSIS] AT SER-1509 AND SER-1511</scope>
    <scope>IDENTIFICATION BY MASS SPECTROMETRY [LARGE SCALE ANALYSIS]</scope>
    <source>
        <tissue>Embryonic fibroblast</tissue>
    </source>
</reference>
<reference key="7">
    <citation type="journal article" date="2010" name="Cell">
        <title>A tissue-specific atlas of mouse protein phosphorylation and expression.</title>
        <authorList>
            <person name="Huttlin E.L."/>
            <person name="Jedrychowski M.P."/>
            <person name="Elias J.E."/>
            <person name="Goswami T."/>
            <person name="Rad R."/>
            <person name="Beausoleil S.A."/>
            <person name="Villen J."/>
            <person name="Haas W."/>
            <person name="Sowa M.E."/>
            <person name="Gygi S.P."/>
        </authorList>
    </citation>
    <scope>PHOSPHORYLATION [LARGE SCALE ANALYSIS] AT SER-1324; TYR-1358; SER-1363; SER-1376; SER-1387; THR-1390; SER-1400; TYR-1408; SER-1453; SER-1460; SER-1509; SER-1511; SER-1513; SER-1537; SER-1539 AND SER-1568</scope>
    <scope>IDENTIFICATION BY MASS SPECTROMETRY [LARGE SCALE ANALYSIS]</scope>
    <source>
        <tissue>Brain</tissue>
        <tissue>Brown adipose tissue</tissue>
        <tissue>Heart</tissue>
        <tissue>Kidney</tissue>
        <tissue>Liver</tissue>
        <tissue>Lung</tissue>
        <tissue>Pancreas</tissue>
        <tissue>Spleen</tissue>
        <tissue>Testis</tissue>
    </source>
</reference>
<reference key="8">
    <citation type="journal article" date="2013" name="Mol. Cell">
        <title>SIRT5-mediated lysine desuccinylation impacts diverse metabolic pathways.</title>
        <authorList>
            <person name="Park J."/>
            <person name="Chen Y."/>
            <person name="Tishkoff D.X."/>
            <person name="Peng C."/>
            <person name="Tan M."/>
            <person name="Dai L."/>
            <person name="Xie Z."/>
            <person name="Zhang Y."/>
            <person name="Zwaans B.M."/>
            <person name="Skinner M.E."/>
            <person name="Lombard D.B."/>
            <person name="Zhao Y."/>
        </authorList>
    </citation>
    <scope>ACETYLATION [LARGE SCALE ANALYSIS] AT ALA-2 AND LYS-3</scope>
    <scope>CLEAVAGE OF INITIATOR METHIONINE [LARGE SCALE ANALYSIS]</scope>
    <scope>IDENTIFICATION BY MASS SPECTROMETRY [LARGE SCALE ANALYSIS]</scope>
    <source>
        <tissue>Embryonic fibroblast</tissue>
    </source>
</reference>
<reference key="9">
    <citation type="journal article" date="2017" name="Biol. Reprod.">
        <title>Identification of KIAA1210 as a novel X-chromosome-linked protein that localizes to the acrosome and associates with the ectoplasmic specialization in testes.</title>
        <authorList>
            <person name="Iwamori T."/>
            <person name="Iwamori N."/>
            <person name="Matsumoto M."/>
            <person name="Ono E."/>
            <person name="Matzuk M.M."/>
        </authorList>
    </citation>
    <scope>INTERACTION WITH KIAA1210</scope>
</reference>
<reference key="10">
    <citation type="journal article" date="2019" name="Nat. Commun.">
        <title>Mutations in topoisomerase IIbeta result in a B cell immunodeficiency.</title>
        <authorList>
            <person name="Broderick L."/>
            <person name="Yost S."/>
            <person name="Li D."/>
            <person name="McGeough M.D."/>
            <person name="Booshehri L.M."/>
            <person name="Guaderrama M."/>
            <person name="Brydges S.D."/>
            <person name="Kucharova K."/>
            <person name="Patel N.C."/>
            <person name="Harr M."/>
            <person name="Hakonarson H."/>
            <person name="Zackai E."/>
            <person name="Cowell I.G."/>
            <person name="Austin C.A."/>
            <person name="Huegle B."/>
            <person name="Gebauer C."/>
            <person name="Zhang J."/>
            <person name="Xu X."/>
            <person name="Wang J."/>
            <person name="Croker B.A."/>
            <person name="Frazer K.A."/>
            <person name="Putnam C.D."/>
            <person name="Hoffman H.M."/>
        </authorList>
    </citation>
    <scope>DISRUPTION PHENOTYPE</scope>
    <scope>FUNCTION</scope>
    <scope>MUTAGENESIS OF GLU-581</scope>
</reference>
<proteinExistence type="evidence at protein level"/>
<evidence type="ECO:0000250" key="1"/>
<evidence type="ECO:0000250" key="2">
    <source>
        <dbReference type="UniProtKB" id="Q02880"/>
    </source>
</evidence>
<evidence type="ECO:0000255" key="3">
    <source>
        <dbReference type="PROSITE-ProRule" id="PRU00995"/>
    </source>
</evidence>
<evidence type="ECO:0000255" key="4">
    <source>
        <dbReference type="PROSITE-ProRule" id="PRU01384"/>
    </source>
</evidence>
<evidence type="ECO:0000256" key="5">
    <source>
        <dbReference type="SAM" id="MobiDB-lite"/>
    </source>
</evidence>
<evidence type="ECO:0000269" key="6">
    <source>
    </source>
</evidence>
<evidence type="ECO:0000269" key="7">
    <source>
    </source>
</evidence>
<evidence type="ECO:0000305" key="8"/>
<evidence type="ECO:0007744" key="9">
    <source>
    </source>
</evidence>
<evidence type="ECO:0007744" key="10">
    <source>
    </source>
</evidence>
<evidence type="ECO:0007744" key="11">
    <source>
    </source>
</evidence>
<evidence type="ECO:0007744" key="12">
    <source>
    </source>
</evidence>
<evidence type="ECO:0007744" key="13">
    <source>
    </source>
</evidence>
<sequence length="1612" mass="181909">MAKSSLAGSDGALTWVNNATKKEELETANKNDSTKKLSVERVYQKKTQLEHILLRPDTYIGSVEPLTQLMWVYDEDVGMNCREVTFVPGLYKIFDEILVNAADNKQRDKNMTCIKVSIDPESNIISIWNNGKGIPVVEHKVEKVYVPALIFGQLLTSSNYDDDEKKVTGGRNGYGAKLCNIFSTKFTVETACKEYKHSFKQTWMNNMMKTSEAKIKHFDGEDYTCITFQPDLSKFKMEKLDKDIVALMTRRAYDLAGSCKGVKVMFNGKKLPVNGFRSYVDLYVKDKLDETGVALKVIHELANERWDVCLTLSEKGFQQISFVNSIATTKGGRHVDYVVDQVVSKLIEVVKKKNKAGVSVKPFQVKNHIWVFINCLIENPTFDSQTKENMTLQPKSFGSKCQLSEKFFKAASNCGIVESILNWVKFKAQTQLNKKCSSVKYSKIKGIPKLDDANDAGGKHSLECTLILTEGDSAKSLAVSGLGVIGRDRYGVFPLRGKILNVREASHKQIMENAEINNIIKIVGLQYKKSYDDAESLKTLRYGKIMIMTDQDQDGSHIKGLLINFIHHNWPSLLKHGFLEEFITPIVKASKNKQELSFYSIPEFDEWKKHIENQKAWKIKYYKGLGTSTAKEAKEYFADMERHRILFRYAGPEDDAAITLAFSKKKIDDRKEWLTNFMEDRRQRRLHGLPEQFLYGTATKHLTYNDFINKELILFSNSDNERSIPSLVDGFKPGQRKVLFTCFKRNDKREVKVAQLAGSVAEMSAYHHGEQALMMTIVNLAQNFVGSNNINLLQPIGQFGTRLHGGKDAASPRYIFTMLSSLARLLFPAVDDNLLKFLYDDNQRVEPEWYIPIIPMVLINGAEGIGTGWACKLPNYDAREIVNNVRRMLEGLDPHPMLPNYKNFKGTIQELGQNQYAVSGEIFVVDRNTVEITELPVRTWTQVYKEQVLEPMLNGTDKTPALISDYKEYHTDTTVKFVVKMTEEKLAQAEAAGLHKVFKLQTTLTCNSMVLFDHMGCLKKYETVQDILKEFFDLRLSYYGLRKEWLVGMLGAESTKLNNQARFILEKIQGKITIENRSKKDLIQMLVQRGYESDPVKAWKEAQEKAAEEEDSQNQHDDSSSDSGTPSGPDFNYILNMSLWSLTKEKVEELIKQRDTKGREVNDLKRKSPSDLWKEDLAAFVEELDKVEAQEREDILAGMSGKAIKGKVGKPKVKKLQLEETMPSPYGRRIVPEITAMKADASRKLLKKKKGDPDTTVVKVEFDEEFSGTPAEGTGEETLTPSAPVNKGPKPKREKKEPGTRVRKTPTSTGKTNAKKVKKRNPWSDDESKSESDLEEAEPVVIPRDSLLRRAAAERPKYTFDFSEEEDDDAAAADDSNDLEELKVKASPITNDGEDEFVPSDGLDKDEYAFSSGKSKATPEKSSNDKKSQDFGNLFSFPSYSQKSEDDSAKFDSNEEDTASVFAPSFGLKQTDKLPSKTVAAKKGKPPSDTAPKAKRAPKQKKIVETINSDSDSEFGIPKKTTTPKGKGRGAKKRKASGSENEGDYNPGRKPSKTASKKPKKTSFDQDSDVDIFPSDFTSEPPALPRTGRARKEVKYFAESDEEEDVDFAMFN</sequence>
<dbReference type="EC" id="5.6.2.2" evidence="2 3"/>
<dbReference type="EMBL" id="D38046">
    <property type="protein sequence ID" value="BAA07236.1"/>
    <property type="molecule type" value="mRNA"/>
</dbReference>
<dbReference type="EMBL" id="BC041106">
    <property type="protein sequence ID" value="AAH41106.1"/>
    <property type="molecule type" value="mRNA"/>
</dbReference>
<dbReference type="EMBL" id="BC054541">
    <property type="protein sequence ID" value="AAH54541.1"/>
    <property type="molecule type" value="mRNA"/>
</dbReference>
<dbReference type="CCDS" id="CCDS26833.1"/>
<dbReference type="RefSeq" id="NP_033435.2">
    <property type="nucleotide sequence ID" value="NM_009409.2"/>
</dbReference>
<dbReference type="SMR" id="Q64511"/>
<dbReference type="BioGRID" id="204277">
    <property type="interactions" value="17"/>
</dbReference>
<dbReference type="FunCoup" id="Q64511">
    <property type="interactions" value="4945"/>
</dbReference>
<dbReference type="IntAct" id="Q64511">
    <property type="interactions" value="8"/>
</dbReference>
<dbReference type="MINT" id="Q64511"/>
<dbReference type="STRING" id="10090.ENSMUSP00000017629"/>
<dbReference type="ChEMBL" id="CHEMBL5564"/>
<dbReference type="GlyGen" id="Q64511">
    <property type="glycosylation" value="3 sites, 1 N-linked glycan (1 site), 1 O-linked glycan (1 site)"/>
</dbReference>
<dbReference type="iPTMnet" id="Q64511"/>
<dbReference type="PhosphoSitePlus" id="Q64511"/>
<dbReference type="jPOST" id="Q64511"/>
<dbReference type="PaxDb" id="10090-ENSMUSP00000017629"/>
<dbReference type="PeptideAtlas" id="Q64511"/>
<dbReference type="ProteomicsDB" id="259155"/>
<dbReference type="Pumba" id="Q64511"/>
<dbReference type="Antibodypedia" id="3893">
    <property type="antibodies" value="292 antibodies from 36 providers"/>
</dbReference>
<dbReference type="DNASU" id="21974"/>
<dbReference type="Ensembl" id="ENSMUST00000017629.12">
    <property type="protein sequence ID" value="ENSMUSP00000017629.5"/>
    <property type="gene ID" value="ENSMUSG00000017485.12"/>
</dbReference>
<dbReference type="GeneID" id="21974"/>
<dbReference type="KEGG" id="mmu:21974"/>
<dbReference type="UCSC" id="uc007shc.1">
    <property type="organism name" value="mouse"/>
</dbReference>
<dbReference type="AGR" id="MGI:98791"/>
<dbReference type="CTD" id="7155"/>
<dbReference type="MGI" id="MGI:98791">
    <property type="gene designation" value="Top2b"/>
</dbReference>
<dbReference type="VEuPathDB" id="HostDB:ENSMUSG00000017485"/>
<dbReference type="eggNOG" id="KOG0355">
    <property type="taxonomic scope" value="Eukaryota"/>
</dbReference>
<dbReference type="GeneTree" id="ENSGT00940000157921"/>
<dbReference type="HOGENOM" id="CLU_001935_1_0_1"/>
<dbReference type="InParanoid" id="Q64511"/>
<dbReference type="OMA" id="TWTQDFK"/>
<dbReference type="OrthoDB" id="276498at2759"/>
<dbReference type="PhylomeDB" id="Q64511"/>
<dbReference type="TreeFam" id="TF105282"/>
<dbReference type="Reactome" id="R-MMU-4615885">
    <property type="pathway name" value="SUMOylation of DNA replication proteins"/>
</dbReference>
<dbReference type="BioGRID-ORCS" id="21974">
    <property type="hits" value="5 hits in 80 CRISPR screens"/>
</dbReference>
<dbReference type="ChiTaRS" id="Top2b">
    <property type="organism name" value="mouse"/>
</dbReference>
<dbReference type="PRO" id="PR:Q64511"/>
<dbReference type="Proteomes" id="UP000000589">
    <property type="component" value="Chromosome 14"/>
</dbReference>
<dbReference type="RNAct" id="Q64511">
    <property type="molecule type" value="protein"/>
</dbReference>
<dbReference type="Bgee" id="ENSMUSG00000017485">
    <property type="expression patterns" value="Expressed in cortical plate and 266 other cell types or tissues"/>
</dbReference>
<dbReference type="ExpressionAtlas" id="Q64511">
    <property type="expression patterns" value="baseline and differential"/>
</dbReference>
<dbReference type="GO" id="GO:0005829">
    <property type="term" value="C:cytosol"/>
    <property type="evidence" value="ECO:0007669"/>
    <property type="project" value="Ensembl"/>
</dbReference>
<dbReference type="GO" id="GO:0005730">
    <property type="term" value="C:nucleolus"/>
    <property type="evidence" value="ECO:0000250"/>
    <property type="project" value="UniProtKB"/>
</dbReference>
<dbReference type="GO" id="GO:0005654">
    <property type="term" value="C:nucleoplasm"/>
    <property type="evidence" value="ECO:0007669"/>
    <property type="project" value="UniProtKB-SubCell"/>
</dbReference>
<dbReference type="GO" id="GO:0005634">
    <property type="term" value="C:nucleus"/>
    <property type="evidence" value="ECO:0000314"/>
    <property type="project" value="MGI"/>
</dbReference>
<dbReference type="GO" id="GO:1990904">
    <property type="term" value="C:ribonucleoprotein complex"/>
    <property type="evidence" value="ECO:0000250"/>
    <property type="project" value="UniProtKB"/>
</dbReference>
<dbReference type="GO" id="GO:0005524">
    <property type="term" value="F:ATP binding"/>
    <property type="evidence" value="ECO:0007669"/>
    <property type="project" value="UniProtKB-KW"/>
</dbReference>
<dbReference type="GO" id="GO:0003682">
    <property type="term" value="F:chromatin binding"/>
    <property type="evidence" value="ECO:0007669"/>
    <property type="project" value="Ensembl"/>
</dbReference>
<dbReference type="GO" id="GO:0003677">
    <property type="term" value="F:DNA binding"/>
    <property type="evidence" value="ECO:0007669"/>
    <property type="project" value="UniProtKB-KW"/>
</dbReference>
<dbReference type="GO" id="GO:0003916">
    <property type="term" value="F:DNA topoisomerase activity"/>
    <property type="evidence" value="ECO:0000250"/>
    <property type="project" value="UniProtKB"/>
</dbReference>
<dbReference type="GO" id="GO:0003918">
    <property type="term" value="F:DNA topoisomerase type II (double strand cut, ATP-hydrolyzing) activity"/>
    <property type="evidence" value="ECO:0000315"/>
    <property type="project" value="UniProtKB"/>
</dbReference>
<dbReference type="GO" id="GO:0046872">
    <property type="term" value="F:metal ion binding"/>
    <property type="evidence" value="ECO:0007669"/>
    <property type="project" value="UniProtKB-KW"/>
</dbReference>
<dbReference type="GO" id="GO:0043021">
    <property type="term" value="F:ribonucleoprotein complex binding"/>
    <property type="evidence" value="ECO:0007669"/>
    <property type="project" value="Ensembl"/>
</dbReference>
<dbReference type="GO" id="GO:0007409">
    <property type="term" value="P:axonogenesis"/>
    <property type="evidence" value="ECO:0000315"/>
    <property type="project" value="MGI"/>
</dbReference>
<dbReference type="GO" id="GO:0030183">
    <property type="term" value="P:B cell differentiation"/>
    <property type="evidence" value="ECO:0000315"/>
    <property type="project" value="UniProtKB"/>
</dbReference>
<dbReference type="GO" id="GO:0071318">
    <property type="term" value="P:cellular response to ATP"/>
    <property type="evidence" value="ECO:0007669"/>
    <property type="project" value="Ensembl"/>
</dbReference>
<dbReference type="GO" id="GO:0070301">
    <property type="term" value="P:cellular response to hydrogen peroxide"/>
    <property type="evidence" value="ECO:0007669"/>
    <property type="project" value="Ensembl"/>
</dbReference>
<dbReference type="GO" id="GO:0090398">
    <property type="term" value="P:cellular senescence"/>
    <property type="evidence" value="ECO:0007669"/>
    <property type="project" value="Ensembl"/>
</dbReference>
<dbReference type="GO" id="GO:0006265">
    <property type="term" value="P:DNA topological change"/>
    <property type="evidence" value="ECO:0000250"/>
    <property type="project" value="UniProtKB"/>
</dbReference>
<dbReference type="GO" id="GO:0030900">
    <property type="term" value="P:forebrain development"/>
    <property type="evidence" value="ECO:0000315"/>
    <property type="project" value="MGI"/>
</dbReference>
<dbReference type="GO" id="GO:0001764">
    <property type="term" value="P:neuron migration"/>
    <property type="evidence" value="ECO:0000315"/>
    <property type="project" value="MGI"/>
</dbReference>
<dbReference type="GO" id="GO:2001034">
    <property type="term" value="P:positive regulation of double-strand break repair via nonhomologous end joining"/>
    <property type="evidence" value="ECO:0007669"/>
    <property type="project" value="Ensembl"/>
</dbReference>
<dbReference type="GO" id="GO:0045870">
    <property type="term" value="P:positive regulation of single stranded viral RNA replication via double stranded DNA intermediate"/>
    <property type="evidence" value="ECO:0007669"/>
    <property type="project" value="Ensembl"/>
</dbReference>
<dbReference type="CDD" id="cd16930">
    <property type="entry name" value="HATPase_TopII-like"/>
    <property type="match status" value="1"/>
</dbReference>
<dbReference type="CDD" id="cd00187">
    <property type="entry name" value="TOP4c"/>
    <property type="match status" value="1"/>
</dbReference>
<dbReference type="CDD" id="cd03481">
    <property type="entry name" value="TopoIIA_Trans_ScTopoIIA"/>
    <property type="match status" value="1"/>
</dbReference>
<dbReference type="CDD" id="cd03365">
    <property type="entry name" value="TOPRIM_TopoIIA"/>
    <property type="match status" value="1"/>
</dbReference>
<dbReference type="FunFam" id="1.10.268.10:FF:000002">
    <property type="entry name" value="DNA topoisomerase 2"/>
    <property type="match status" value="1"/>
</dbReference>
<dbReference type="FunFam" id="3.30.1360.40:FF:000003">
    <property type="entry name" value="DNA topoisomerase 2"/>
    <property type="match status" value="1"/>
</dbReference>
<dbReference type="FunFam" id="3.30.1490.30:FF:000001">
    <property type="entry name" value="DNA topoisomerase 2"/>
    <property type="match status" value="1"/>
</dbReference>
<dbReference type="FunFam" id="3.30.230.10:FF:000008">
    <property type="entry name" value="DNA topoisomerase 2"/>
    <property type="match status" value="1"/>
</dbReference>
<dbReference type="FunFam" id="3.30.565.10:FF:000004">
    <property type="entry name" value="DNA topoisomerase 2"/>
    <property type="match status" value="1"/>
</dbReference>
<dbReference type="FunFam" id="3.40.50.670:FF:000001">
    <property type="entry name" value="DNA topoisomerase 2"/>
    <property type="match status" value="1"/>
</dbReference>
<dbReference type="FunFam" id="3.90.199.10:FF:000002">
    <property type="entry name" value="DNA topoisomerase 2"/>
    <property type="match status" value="1"/>
</dbReference>
<dbReference type="Gene3D" id="3.30.1360.40">
    <property type="match status" value="1"/>
</dbReference>
<dbReference type="Gene3D" id="3.30.1490.30">
    <property type="match status" value="1"/>
</dbReference>
<dbReference type="Gene3D" id="3.30.230.10">
    <property type="match status" value="1"/>
</dbReference>
<dbReference type="Gene3D" id="3.40.50.670">
    <property type="match status" value="1"/>
</dbReference>
<dbReference type="Gene3D" id="3.30.565.10">
    <property type="entry name" value="Histidine kinase-like ATPase, C-terminal domain"/>
    <property type="match status" value="1"/>
</dbReference>
<dbReference type="Gene3D" id="3.90.199.10">
    <property type="entry name" value="Topoisomerase II, domain 5"/>
    <property type="match status" value="1"/>
</dbReference>
<dbReference type="Gene3D" id="1.10.268.10">
    <property type="entry name" value="Topoisomerase, domain 3"/>
    <property type="match status" value="1"/>
</dbReference>
<dbReference type="InterPro" id="IPR050634">
    <property type="entry name" value="DNA_Topoisomerase_II"/>
</dbReference>
<dbReference type="InterPro" id="IPR012542">
    <property type="entry name" value="DTHCT"/>
</dbReference>
<dbReference type="InterPro" id="IPR036890">
    <property type="entry name" value="HATPase_C_sf"/>
</dbReference>
<dbReference type="InterPro" id="IPR020568">
    <property type="entry name" value="Ribosomal_Su5_D2-typ_SF"/>
</dbReference>
<dbReference type="InterPro" id="IPR014721">
    <property type="entry name" value="Ribsml_uS5_D2-typ_fold_subgr"/>
</dbReference>
<dbReference type="InterPro" id="IPR001241">
    <property type="entry name" value="Topo_IIA"/>
</dbReference>
<dbReference type="InterPro" id="IPR013760">
    <property type="entry name" value="Topo_IIA-like_dom_sf"/>
</dbReference>
<dbReference type="InterPro" id="IPR013758">
    <property type="entry name" value="Topo_IIA_A/C_ab"/>
</dbReference>
<dbReference type="InterPro" id="IPR013757">
    <property type="entry name" value="Topo_IIA_A_a_sf"/>
</dbReference>
<dbReference type="InterPro" id="IPR013759">
    <property type="entry name" value="Topo_IIA_B_C"/>
</dbReference>
<dbReference type="InterPro" id="IPR013506">
    <property type="entry name" value="Topo_IIA_bsu_dom2"/>
</dbReference>
<dbReference type="InterPro" id="IPR002205">
    <property type="entry name" value="Topo_IIA_dom_A"/>
</dbReference>
<dbReference type="InterPro" id="IPR001154">
    <property type="entry name" value="TopoII_euk"/>
</dbReference>
<dbReference type="InterPro" id="IPR018522">
    <property type="entry name" value="TopoIIA_CS"/>
</dbReference>
<dbReference type="InterPro" id="IPR031660">
    <property type="entry name" value="TOPRIM_C"/>
</dbReference>
<dbReference type="InterPro" id="IPR006171">
    <property type="entry name" value="TOPRIM_dom"/>
</dbReference>
<dbReference type="InterPro" id="IPR034157">
    <property type="entry name" value="TOPRIM_TopoII"/>
</dbReference>
<dbReference type="PANTHER" id="PTHR10169:SF36">
    <property type="entry name" value="DNA TOPOISOMERASE 2-BETA"/>
    <property type="match status" value="1"/>
</dbReference>
<dbReference type="PANTHER" id="PTHR10169">
    <property type="entry name" value="DNA TOPOISOMERASE/GYRASE"/>
    <property type="match status" value="1"/>
</dbReference>
<dbReference type="Pfam" id="PF00204">
    <property type="entry name" value="DNA_gyraseB"/>
    <property type="match status" value="1"/>
</dbReference>
<dbReference type="Pfam" id="PF00521">
    <property type="entry name" value="DNA_topoisoIV"/>
    <property type="match status" value="1"/>
</dbReference>
<dbReference type="Pfam" id="PF08070">
    <property type="entry name" value="DTHCT"/>
    <property type="match status" value="1"/>
</dbReference>
<dbReference type="Pfam" id="PF02518">
    <property type="entry name" value="HATPase_c"/>
    <property type="match status" value="1"/>
</dbReference>
<dbReference type="Pfam" id="PF01751">
    <property type="entry name" value="Toprim"/>
    <property type="match status" value="1"/>
</dbReference>
<dbReference type="Pfam" id="PF16898">
    <property type="entry name" value="TOPRIM_C"/>
    <property type="match status" value="1"/>
</dbReference>
<dbReference type="PRINTS" id="PR01158">
    <property type="entry name" value="TOPISMRASEII"/>
</dbReference>
<dbReference type="PRINTS" id="PR00418">
    <property type="entry name" value="TPI2FAMILY"/>
</dbReference>
<dbReference type="SMART" id="SM00433">
    <property type="entry name" value="TOP2c"/>
    <property type="match status" value="1"/>
</dbReference>
<dbReference type="SMART" id="SM00434">
    <property type="entry name" value="TOP4c"/>
    <property type="match status" value="1"/>
</dbReference>
<dbReference type="SUPFAM" id="SSF55874">
    <property type="entry name" value="ATPase domain of HSP90 chaperone/DNA topoisomerase II/histidine kinase"/>
    <property type="match status" value="1"/>
</dbReference>
<dbReference type="SUPFAM" id="SSF54211">
    <property type="entry name" value="Ribosomal protein S5 domain 2-like"/>
    <property type="match status" value="1"/>
</dbReference>
<dbReference type="SUPFAM" id="SSF56719">
    <property type="entry name" value="Type II DNA topoisomerase"/>
    <property type="match status" value="1"/>
</dbReference>
<dbReference type="PROSITE" id="PS52040">
    <property type="entry name" value="TOPO_IIA"/>
    <property type="match status" value="1"/>
</dbReference>
<dbReference type="PROSITE" id="PS00177">
    <property type="entry name" value="TOPOISOMERASE_II"/>
    <property type="match status" value="1"/>
</dbReference>
<dbReference type="PROSITE" id="PS50880">
    <property type="entry name" value="TOPRIM"/>
    <property type="match status" value="1"/>
</dbReference>
<keyword id="KW-0007">Acetylation</keyword>
<keyword id="KW-0067">ATP-binding</keyword>
<keyword id="KW-0238">DNA-binding</keyword>
<keyword id="KW-0413">Isomerase</keyword>
<keyword id="KW-1017">Isopeptide bond</keyword>
<keyword id="KW-0460">Magnesium</keyword>
<keyword id="KW-0479">Metal-binding</keyword>
<keyword id="KW-0547">Nucleotide-binding</keyword>
<keyword id="KW-0539">Nucleus</keyword>
<keyword id="KW-0597">Phosphoprotein</keyword>
<keyword id="KW-1185">Reference proteome</keyword>
<keyword id="KW-0799">Topoisomerase</keyword>
<keyword id="KW-0832">Ubl conjugation</keyword>
<feature type="initiator methionine" description="Removed" evidence="13">
    <location>
        <position position="1"/>
    </location>
</feature>
<feature type="chain" id="PRO_0000145370" description="DNA topoisomerase 2-beta">
    <location>
        <begin position="2"/>
        <end position="1612"/>
    </location>
</feature>
<feature type="domain" description="Toprim" evidence="3">
    <location>
        <begin position="464"/>
        <end position="581"/>
    </location>
</feature>
<feature type="domain" description="Topo IIA-type catalytic" evidence="4">
    <location>
        <begin position="724"/>
        <end position="1177"/>
    </location>
</feature>
<feature type="region of interest" description="Interaction with DNA" evidence="1">
    <location>
        <begin position="351"/>
        <end position="353"/>
    </location>
</feature>
<feature type="region of interest" description="Interaction with DNA" evidence="1">
    <location>
        <begin position="999"/>
        <end position="1008"/>
    </location>
</feature>
<feature type="region of interest" description="Disordered" evidence="5">
    <location>
        <begin position="1098"/>
        <end position="1128"/>
    </location>
</feature>
<feature type="region of interest" description="Disordered" evidence="5">
    <location>
        <begin position="1245"/>
        <end position="1586"/>
    </location>
</feature>
<feature type="region of interest" description="Interaction with PLSCR1" evidence="2">
    <location>
        <begin position="1493"/>
        <end position="1499"/>
    </location>
</feature>
<feature type="compositionally biased region" description="Basic and acidic residues" evidence="5">
    <location>
        <begin position="1322"/>
        <end position="1332"/>
    </location>
</feature>
<feature type="compositionally biased region" description="Basic and acidic residues" evidence="5">
    <location>
        <begin position="1346"/>
        <end position="1358"/>
    </location>
</feature>
<feature type="compositionally biased region" description="Acidic residues" evidence="5">
    <location>
        <begin position="1362"/>
        <end position="1379"/>
    </location>
</feature>
<feature type="compositionally biased region" description="Basic and acidic residues" evidence="5">
    <location>
        <begin position="1417"/>
        <end position="1429"/>
    </location>
</feature>
<feature type="compositionally biased region" description="Basic and acidic residues" evidence="5">
    <location>
        <begin position="1443"/>
        <end position="1453"/>
    </location>
</feature>
<feature type="compositionally biased region" description="Basic residues" evidence="5">
    <location>
        <begin position="1526"/>
        <end position="1536"/>
    </location>
</feature>
<feature type="compositionally biased region" description="Basic residues" evidence="5">
    <location>
        <begin position="1550"/>
        <end position="1561"/>
    </location>
</feature>
<feature type="active site" description="O-(5'-phospho-DNA)-tyrosine intermediate" evidence="4">
    <location>
        <position position="814"/>
    </location>
</feature>
<feature type="binding site" evidence="1">
    <location>
        <position position="100"/>
    </location>
    <ligand>
        <name>ATP</name>
        <dbReference type="ChEBI" id="CHEBI:30616"/>
    </ligand>
</feature>
<feature type="binding site" evidence="1">
    <location>
        <position position="129"/>
    </location>
    <ligand>
        <name>ATP</name>
        <dbReference type="ChEBI" id="CHEBI:30616"/>
    </ligand>
</feature>
<feature type="binding site" evidence="1">
    <location>
        <begin position="157"/>
        <end position="159"/>
    </location>
    <ligand>
        <name>ATP</name>
        <dbReference type="ChEBI" id="CHEBI:30616"/>
    </ligand>
</feature>
<feature type="binding site" evidence="1">
    <location>
        <begin position="170"/>
        <end position="177"/>
    </location>
    <ligand>
        <name>ATP</name>
        <dbReference type="ChEBI" id="CHEBI:30616"/>
    </ligand>
</feature>
<feature type="binding site" evidence="1">
    <location>
        <begin position="385"/>
        <end position="387"/>
    </location>
    <ligand>
        <name>ATP</name>
        <dbReference type="ChEBI" id="CHEBI:30616"/>
    </ligand>
</feature>
<feature type="binding site" evidence="3">
    <location>
        <position position="470"/>
    </location>
    <ligand>
        <name>Mg(2+)</name>
        <dbReference type="ChEBI" id="CHEBI:18420"/>
        <label>1</label>
        <note>catalytic</note>
    </ligand>
</feature>
<feature type="binding site" evidence="3">
    <location>
        <position position="550"/>
    </location>
    <ligand>
        <name>Mg(2+)</name>
        <dbReference type="ChEBI" id="CHEBI:18420"/>
        <label>1</label>
        <note>catalytic</note>
    </ligand>
</feature>
<feature type="binding site" evidence="3">
    <location>
        <position position="550"/>
    </location>
    <ligand>
        <name>Mg(2+)</name>
        <dbReference type="ChEBI" id="CHEBI:18420"/>
        <label>2</label>
    </ligand>
</feature>
<feature type="binding site" evidence="3">
    <location>
        <position position="552"/>
    </location>
    <ligand>
        <name>Mg(2+)</name>
        <dbReference type="ChEBI" id="CHEBI:18420"/>
        <label>2</label>
    </ligand>
</feature>
<feature type="site" description="Interaction with DNA" evidence="3">
    <location>
        <position position="498"/>
    </location>
</feature>
<feature type="site" description="Interaction with DNA" evidence="3">
    <location>
        <position position="501"/>
    </location>
</feature>
<feature type="site" description="Interaction with DNA" evidence="3">
    <location>
        <position position="670"/>
    </location>
</feature>
<feature type="site" description="Interaction with DNA" evidence="3">
    <location>
        <position position="671"/>
    </location>
</feature>
<feature type="site" description="Interaction with DNA" evidence="3">
    <location>
        <position position="732"/>
    </location>
</feature>
<feature type="site" description="Interaction with DNA" evidence="3">
    <location>
        <position position="766"/>
    </location>
</feature>
<feature type="site" description="Transition state stabilizer" evidence="1">
    <location>
        <position position="813"/>
    </location>
</feature>
<feature type="site" description="Important for DNA bending; intercalates between base pairs of target DNA" evidence="1">
    <location>
        <position position="865"/>
    </location>
</feature>
<feature type="site" description="Interaction with DNA" evidence="3">
    <location>
        <position position="940"/>
    </location>
</feature>
<feature type="modified residue" description="N-acetylalanine" evidence="13">
    <location>
        <position position="2"/>
    </location>
</feature>
<feature type="modified residue" description="N6-acetyllysine" evidence="13">
    <location>
        <position position="3"/>
    </location>
</feature>
<feature type="modified residue" description="Phosphoserine" evidence="2">
    <location>
        <position position="1224"/>
    </location>
</feature>
<feature type="modified residue" description="Phosphothreonine" evidence="2">
    <location>
        <position position="1280"/>
    </location>
</feature>
<feature type="modified residue" description="Phosphoserine" evidence="12">
    <location>
        <position position="1324"/>
    </location>
</feature>
<feature type="modified residue" description="Phosphoserine" evidence="2">
    <location>
        <position position="1328"/>
    </location>
</feature>
<feature type="modified residue" description="Phosphoserine" evidence="2">
    <location>
        <position position="1330"/>
    </location>
</feature>
<feature type="modified residue" description="Phosphoserine" evidence="2">
    <location>
        <position position="1332"/>
    </location>
</feature>
<feature type="modified residue" description="Phosphoserine" evidence="2">
    <location>
        <position position="1346"/>
    </location>
</feature>
<feature type="modified residue" description="Phosphotyrosine" evidence="12">
    <location>
        <position position="1358"/>
    </location>
</feature>
<feature type="modified residue" description="Phosphoserine" evidence="12">
    <location>
        <position position="1363"/>
    </location>
</feature>
<feature type="modified residue" description="Phosphoserine" evidence="12">
    <location>
        <position position="1376"/>
    </location>
</feature>
<feature type="modified residue" description="Phosphoserine" evidence="9 12">
    <location>
        <position position="1387"/>
    </location>
</feature>
<feature type="modified residue" description="Phosphothreonine" evidence="12">
    <location>
        <position position="1390"/>
    </location>
</feature>
<feature type="modified residue" description="Phosphoserine" evidence="11 12">
    <location>
        <position position="1400"/>
    </location>
</feature>
<feature type="modified residue" description="Phosphotyrosine" evidence="12">
    <location>
        <position position="1408"/>
    </location>
</feature>
<feature type="modified residue" description="Phosphoserine" evidence="2">
    <location>
        <position position="1411"/>
    </location>
</feature>
<feature type="modified residue" description="Phosphoserine" evidence="2">
    <location>
        <position position="1428"/>
    </location>
</feature>
<feature type="modified residue" description="Phosphoserine" evidence="2">
    <location>
        <position position="1439"/>
    </location>
</feature>
<feature type="modified residue" description="Phosphoserine" evidence="2">
    <location>
        <position position="1441"/>
    </location>
</feature>
<feature type="modified residue" description="Phosphoserine" evidence="2">
    <location>
        <position position="1448"/>
    </location>
</feature>
<feature type="modified residue" description="Phosphoserine" evidence="12">
    <location>
        <position position="1453"/>
    </location>
</feature>
<feature type="modified residue" description="Phosphoserine" evidence="12">
    <location>
        <position position="1460"/>
    </location>
</feature>
<feature type="modified residue" description="Phosphoserine" evidence="9 10 11 12">
    <location>
        <position position="1509"/>
    </location>
</feature>
<feature type="modified residue" description="Phosphoserine" evidence="9 10 11 12">
    <location>
        <position position="1511"/>
    </location>
</feature>
<feature type="modified residue" description="Phosphoserine" evidence="9 12">
    <location>
        <position position="1513"/>
    </location>
</feature>
<feature type="modified residue" description="Phosphoserine" evidence="9 12">
    <location>
        <position position="1537"/>
    </location>
</feature>
<feature type="modified residue" description="Phosphoserine" evidence="9 12">
    <location>
        <position position="1539"/>
    </location>
</feature>
<feature type="modified residue" description="Phosphothreonine" evidence="2">
    <location>
        <position position="1562"/>
    </location>
</feature>
<feature type="modified residue" description="Phosphoserine" evidence="2">
    <location>
        <position position="1563"/>
    </location>
</feature>
<feature type="modified residue" description="Phosphoserine" evidence="12">
    <location>
        <position position="1568"/>
    </location>
</feature>
<feature type="modified residue" description="Phosphotyrosine" evidence="2">
    <location>
        <position position="1596"/>
    </location>
</feature>
<feature type="modified residue" description="Phosphoserine" evidence="2">
    <location>
        <position position="1600"/>
    </location>
</feature>
<feature type="cross-link" description="Glycyl lysine isopeptide (Lys-Gly) (interchain with G-Cter in SUMO2)" evidence="2">
    <location>
        <position position="21"/>
    </location>
</feature>
<feature type="cross-link" description="Glycyl lysine isopeptide (Lys-Gly) (interchain with G-Cter in SUMO2)" evidence="2">
    <location>
        <position position="22"/>
    </location>
</feature>
<feature type="cross-link" description="Glycyl lysine isopeptide (Lys-Gly) (interchain with G-Cter in SUMO2)" evidence="2">
    <location>
        <position position="165"/>
    </location>
</feature>
<feature type="cross-link" description="Glycyl lysine isopeptide (Lys-Gly) (interchain with G-Cter in SUMO2)" evidence="2">
    <location>
        <position position="166"/>
    </location>
</feature>
<feature type="cross-link" description="Glycyl lysine isopeptide (Lys-Gly) (interchain with G-Cter in SUMO2)" evidence="2">
    <location>
        <position position="216"/>
    </location>
</feature>
<feature type="cross-link" description="Glycyl lysine isopeptide (Lys-Gly) (interchain with G-Cter in SUMO2)" evidence="2">
    <location>
        <position position="287"/>
    </location>
</feature>
<feature type="cross-link" description="Glycyl lysine isopeptide (Lys-Gly) (interchain with G-Cter in SUMO2)" evidence="2">
    <location>
        <position position="355"/>
    </location>
</feature>
<feature type="cross-link" description="Glycyl lysine isopeptide (Lys-Gly) (interchain with G-Cter in SUMO2)" evidence="2">
    <location>
        <position position="361"/>
    </location>
</feature>
<feature type="cross-link" description="Glycyl lysine isopeptide (Lys-Gly) (interchain with G-Cter in SUMO2)" evidence="2">
    <location>
        <position position="425"/>
    </location>
</feature>
<feature type="cross-link" description="Glycyl lysine isopeptide (Lys-Gly) (interchain with G-Cter in SUMO2)" evidence="2">
    <location>
        <position position="427"/>
    </location>
</feature>
<feature type="cross-link" description="Glycyl lysine isopeptide (Lys-Gly) (interchain with G-Cter in SUMO2)" evidence="2">
    <location>
        <position position="434"/>
    </location>
</feature>
<feature type="cross-link" description="Glycyl lysine isopeptide (Lys-Gly) (interchain with G-Cter in SUMO2)" evidence="2">
    <location>
        <position position="588"/>
    </location>
</feature>
<feature type="cross-link" description="Glycyl lysine isopeptide (Lys-Gly) (interchain with G-Cter in SUMO2)" evidence="2">
    <location>
        <position position="593"/>
    </location>
</feature>
<feature type="cross-link" description="Glycyl lysine isopeptide (Lys-Gly) (interchain with G-Cter in SUMO2)" evidence="2">
    <location>
        <position position="623"/>
    </location>
</feature>
<feature type="cross-link" description="Glycyl lysine isopeptide (Lys-Gly) (interchain with G-Cter in SUMO2)" evidence="2">
    <location>
        <position position="631"/>
    </location>
</feature>
<feature type="cross-link" description="Glycyl lysine isopeptide (Lys-Gly) (interchain with G-Cter in SUMO2)" evidence="2">
    <location>
        <position position="634"/>
    </location>
</feature>
<feature type="cross-link" description="Glycyl lysine isopeptide (Lys-Gly) (interchain with G-Cter in SUMO2)" evidence="2">
    <location>
        <position position="664"/>
    </location>
</feature>
<feature type="cross-link" description="Glycyl lysine isopeptide (Lys-Gly) (interchain with G-Cter in SUMO2)" evidence="2">
    <location>
        <position position="700"/>
    </location>
</feature>
<feature type="cross-link" description="Glycyl lysine isopeptide (Lys-Gly) (interchain with G-Cter in SUMO2)" evidence="2">
    <location>
        <position position="1080"/>
    </location>
</feature>
<feature type="cross-link" description="Glycyl lysine isopeptide (Lys-Gly) (interchain with G-Cter in SUMO2)" evidence="2">
    <location>
        <position position="1202"/>
    </location>
</feature>
<feature type="cross-link" description="Glycyl lysine isopeptide (Lys-Gly) (interchain with G-Cter in SUMO2)" evidence="2">
    <location>
        <position position="1205"/>
    </location>
</feature>
<feature type="cross-link" description="Glycyl lysine isopeptide (Lys-Gly) (interchain with G-Cter in SUMO2)" evidence="2">
    <location>
        <position position="1214"/>
    </location>
</feature>
<feature type="cross-link" description="Glycyl lysine isopeptide (Lys-Gly) (interchain with G-Cter in SUMO2)" evidence="2">
    <location>
        <position position="1215"/>
    </location>
</feature>
<feature type="cross-link" description="Glycyl lysine isopeptide (Lys-Gly) (interchain with G-Cter in SUMO2)" evidence="2">
    <location>
        <position position="1238"/>
    </location>
</feature>
<feature type="cross-link" description="Glycyl lysine isopeptide (Lys-Gly) (interchain with G-Cter in SUMO2)" evidence="2">
    <location>
        <position position="1250"/>
    </location>
</feature>
<feature type="cross-link" description="Glycyl lysine isopeptide (Lys-Gly) (interchain with G-Cter in SUMO2)" evidence="2">
    <location>
        <position position="1259"/>
    </location>
</feature>
<feature type="cross-link" description="Glycyl lysine isopeptide (Lys-Gly) (interchain with G-Cter in SUMO2)" evidence="2">
    <location>
        <position position="1311"/>
    </location>
</feature>
<feature type="cross-link" description="Glycyl lysine isopeptide (Lys-Gly) (interchain with G-Cter in SUMO2)" evidence="2">
    <location>
        <position position="1315"/>
    </location>
</feature>
<feature type="cross-link" description="Glycyl lysine isopeptide (Lys-Gly) (interchain with G-Cter in SUMO2)" evidence="2">
    <location>
        <position position="1385"/>
    </location>
</feature>
<feature type="cross-link" description="Glycyl lysine isopeptide (Lys-Gly) (interchain with G-Cter in SUMO2)" evidence="2">
    <location>
        <position position="1427"/>
    </location>
</feature>
<feature type="cross-link" description="Glycyl lysine isopeptide (Lys-Gly) (interchain with G-Cter in SUMO2)" evidence="2">
    <location>
        <position position="1443"/>
    </location>
</feature>
<feature type="cross-link" description="Glycyl lysine isopeptide (Lys-Gly) (interchain with G-Cter in SUMO2)" evidence="2">
    <location>
        <position position="1477"/>
    </location>
</feature>
<feature type="mutagenesis site" description="Impairs B-cell development." evidence="7">
    <location>
        <position position="581"/>
    </location>
</feature>
<feature type="sequence conflict" description="In Ref. 1; BAA07236." evidence="8" ref="1">
    <original>V</original>
    <variation>A</variation>
    <location>
        <position position="16"/>
    </location>
</feature>
<feature type="sequence conflict" description="In Ref. 1; BAA07236." evidence="8" ref="1">
    <original>L</original>
    <variation>P</variation>
    <location>
        <position position="1434"/>
    </location>
</feature>
<organism>
    <name type="scientific">Mus musculus</name>
    <name type="common">Mouse</name>
    <dbReference type="NCBI Taxonomy" id="10090"/>
    <lineage>
        <taxon>Eukaryota</taxon>
        <taxon>Metazoa</taxon>
        <taxon>Chordata</taxon>
        <taxon>Craniata</taxon>
        <taxon>Vertebrata</taxon>
        <taxon>Euteleostomi</taxon>
        <taxon>Mammalia</taxon>
        <taxon>Eutheria</taxon>
        <taxon>Euarchontoglires</taxon>
        <taxon>Glires</taxon>
        <taxon>Rodentia</taxon>
        <taxon>Myomorpha</taxon>
        <taxon>Muroidea</taxon>
        <taxon>Muridae</taxon>
        <taxon>Murinae</taxon>
        <taxon>Mus</taxon>
        <taxon>Mus</taxon>
    </lineage>
</organism>
<name>TOP2B_MOUSE</name>
<protein>
    <recommendedName>
        <fullName>DNA topoisomerase 2-beta</fullName>
        <ecNumber evidence="2 3">5.6.2.2</ecNumber>
    </recommendedName>
    <alternativeName>
        <fullName>DNA topoisomerase II, beta isozyme</fullName>
    </alternativeName>
</protein>
<gene>
    <name type="primary">Top2b</name>
</gene>